<reference key="1">
    <citation type="submission" date="2008-06" db="EMBL/GenBank/DDBJ databases">
        <title>Complete sequence of Stenotrophomonas maltophilia R551-3.</title>
        <authorList>
            <consortium name="US DOE Joint Genome Institute"/>
            <person name="Lucas S."/>
            <person name="Copeland A."/>
            <person name="Lapidus A."/>
            <person name="Glavina del Rio T."/>
            <person name="Dalin E."/>
            <person name="Tice H."/>
            <person name="Pitluck S."/>
            <person name="Chain P."/>
            <person name="Malfatti S."/>
            <person name="Shin M."/>
            <person name="Vergez L."/>
            <person name="Lang D."/>
            <person name="Schmutz J."/>
            <person name="Larimer F."/>
            <person name="Land M."/>
            <person name="Hauser L."/>
            <person name="Kyrpides N."/>
            <person name="Mikhailova N."/>
            <person name="Taghavi S."/>
            <person name="Monchy S."/>
            <person name="Newman L."/>
            <person name="Vangronsveld J."/>
            <person name="van der Lelie D."/>
            <person name="Richardson P."/>
        </authorList>
    </citation>
    <scope>NUCLEOTIDE SEQUENCE [LARGE SCALE GENOMIC DNA]</scope>
    <source>
        <strain>R551-3</strain>
    </source>
</reference>
<organism>
    <name type="scientific">Stenotrophomonas maltophilia (strain R551-3)</name>
    <dbReference type="NCBI Taxonomy" id="391008"/>
    <lineage>
        <taxon>Bacteria</taxon>
        <taxon>Pseudomonadati</taxon>
        <taxon>Pseudomonadota</taxon>
        <taxon>Gammaproteobacteria</taxon>
        <taxon>Lysobacterales</taxon>
        <taxon>Lysobacteraceae</taxon>
        <taxon>Stenotrophomonas</taxon>
        <taxon>Stenotrophomonas maltophilia group</taxon>
    </lineage>
</organism>
<feature type="chain" id="PRO_1000092039" description="5'-nucleotidase SurE">
    <location>
        <begin position="1"/>
        <end position="259"/>
    </location>
</feature>
<feature type="binding site" evidence="1">
    <location>
        <position position="8"/>
    </location>
    <ligand>
        <name>a divalent metal cation</name>
        <dbReference type="ChEBI" id="CHEBI:60240"/>
    </ligand>
</feature>
<feature type="binding site" evidence="1">
    <location>
        <position position="9"/>
    </location>
    <ligand>
        <name>a divalent metal cation</name>
        <dbReference type="ChEBI" id="CHEBI:60240"/>
    </ligand>
</feature>
<feature type="binding site" evidence="1">
    <location>
        <position position="40"/>
    </location>
    <ligand>
        <name>a divalent metal cation</name>
        <dbReference type="ChEBI" id="CHEBI:60240"/>
    </ligand>
</feature>
<feature type="binding site" evidence="1">
    <location>
        <position position="92"/>
    </location>
    <ligand>
        <name>a divalent metal cation</name>
        <dbReference type="ChEBI" id="CHEBI:60240"/>
    </ligand>
</feature>
<gene>
    <name evidence="1" type="primary">surE</name>
    <name type="ordered locus">Smal_1458</name>
</gene>
<accession>B4SR92</accession>
<sequence>MRILVSNDDGVDAAGIRMLASVLREAGHEVTVVAPDRDRSGASNSLTLDLPIRLKRIDHYTVSVAGTPTDCVHLALTGLLEFEPDIVVSGINNAANLGDDVIYSGTVSAAMEGRFLGLPAVAVSLVSRNHDPKHFETAARAAVEIVARLKADPLPADTILNVNVPDLPWNEVKGFEVTRLGNRHRAEGCIAQKDPRGNEVYWIGPAGREQDSGPGTDFHAVRTGHISITPIQVDLTRYQALEKVASWVGGLSAALDQPA</sequence>
<proteinExistence type="inferred from homology"/>
<dbReference type="EC" id="3.1.3.5" evidence="1"/>
<dbReference type="EMBL" id="CP001111">
    <property type="protein sequence ID" value="ACF51163.1"/>
    <property type="molecule type" value="Genomic_DNA"/>
</dbReference>
<dbReference type="RefSeq" id="WP_012510655.1">
    <property type="nucleotide sequence ID" value="NC_011071.1"/>
</dbReference>
<dbReference type="SMR" id="B4SR92"/>
<dbReference type="STRING" id="391008.Smal_1458"/>
<dbReference type="KEGG" id="smt:Smal_1458"/>
<dbReference type="eggNOG" id="COG0496">
    <property type="taxonomic scope" value="Bacteria"/>
</dbReference>
<dbReference type="HOGENOM" id="CLU_045192_1_2_6"/>
<dbReference type="OrthoDB" id="9780815at2"/>
<dbReference type="Proteomes" id="UP000001867">
    <property type="component" value="Chromosome"/>
</dbReference>
<dbReference type="GO" id="GO:0005737">
    <property type="term" value="C:cytoplasm"/>
    <property type="evidence" value="ECO:0007669"/>
    <property type="project" value="UniProtKB-SubCell"/>
</dbReference>
<dbReference type="GO" id="GO:0008254">
    <property type="term" value="F:3'-nucleotidase activity"/>
    <property type="evidence" value="ECO:0007669"/>
    <property type="project" value="TreeGrafter"/>
</dbReference>
<dbReference type="GO" id="GO:0008253">
    <property type="term" value="F:5'-nucleotidase activity"/>
    <property type="evidence" value="ECO:0007669"/>
    <property type="project" value="UniProtKB-UniRule"/>
</dbReference>
<dbReference type="GO" id="GO:0004309">
    <property type="term" value="F:exopolyphosphatase activity"/>
    <property type="evidence" value="ECO:0007669"/>
    <property type="project" value="TreeGrafter"/>
</dbReference>
<dbReference type="GO" id="GO:0046872">
    <property type="term" value="F:metal ion binding"/>
    <property type="evidence" value="ECO:0007669"/>
    <property type="project" value="UniProtKB-UniRule"/>
</dbReference>
<dbReference type="GO" id="GO:0000166">
    <property type="term" value="F:nucleotide binding"/>
    <property type="evidence" value="ECO:0007669"/>
    <property type="project" value="UniProtKB-KW"/>
</dbReference>
<dbReference type="FunFam" id="3.40.1210.10:FF:000001">
    <property type="entry name" value="5'/3'-nucleotidase SurE"/>
    <property type="match status" value="1"/>
</dbReference>
<dbReference type="Gene3D" id="3.40.1210.10">
    <property type="entry name" value="Survival protein SurE-like phosphatase/nucleotidase"/>
    <property type="match status" value="1"/>
</dbReference>
<dbReference type="HAMAP" id="MF_00060">
    <property type="entry name" value="SurE"/>
    <property type="match status" value="1"/>
</dbReference>
<dbReference type="InterPro" id="IPR030048">
    <property type="entry name" value="SurE"/>
</dbReference>
<dbReference type="InterPro" id="IPR002828">
    <property type="entry name" value="SurE-like_Pase/nucleotidase"/>
</dbReference>
<dbReference type="InterPro" id="IPR036523">
    <property type="entry name" value="SurE-like_sf"/>
</dbReference>
<dbReference type="NCBIfam" id="NF001489">
    <property type="entry name" value="PRK00346.1-3"/>
    <property type="match status" value="1"/>
</dbReference>
<dbReference type="NCBIfam" id="NF001490">
    <property type="entry name" value="PRK00346.1-4"/>
    <property type="match status" value="1"/>
</dbReference>
<dbReference type="NCBIfam" id="TIGR00087">
    <property type="entry name" value="surE"/>
    <property type="match status" value="1"/>
</dbReference>
<dbReference type="PANTHER" id="PTHR30457">
    <property type="entry name" value="5'-NUCLEOTIDASE SURE"/>
    <property type="match status" value="1"/>
</dbReference>
<dbReference type="PANTHER" id="PTHR30457:SF12">
    <property type="entry name" value="5'_3'-NUCLEOTIDASE SURE"/>
    <property type="match status" value="1"/>
</dbReference>
<dbReference type="Pfam" id="PF01975">
    <property type="entry name" value="SurE"/>
    <property type="match status" value="1"/>
</dbReference>
<dbReference type="SUPFAM" id="SSF64167">
    <property type="entry name" value="SurE-like"/>
    <property type="match status" value="1"/>
</dbReference>
<keyword id="KW-0963">Cytoplasm</keyword>
<keyword id="KW-0378">Hydrolase</keyword>
<keyword id="KW-0479">Metal-binding</keyword>
<keyword id="KW-0547">Nucleotide-binding</keyword>
<name>SURE_STRM5</name>
<evidence type="ECO:0000255" key="1">
    <source>
        <dbReference type="HAMAP-Rule" id="MF_00060"/>
    </source>
</evidence>
<comment type="function">
    <text evidence="1">Nucleotidase that shows phosphatase activity on nucleoside 5'-monophosphates.</text>
</comment>
<comment type="catalytic activity">
    <reaction evidence="1">
        <text>a ribonucleoside 5'-phosphate + H2O = a ribonucleoside + phosphate</text>
        <dbReference type="Rhea" id="RHEA:12484"/>
        <dbReference type="ChEBI" id="CHEBI:15377"/>
        <dbReference type="ChEBI" id="CHEBI:18254"/>
        <dbReference type="ChEBI" id="CHEBI:43474"/>
        <dbReference type="ChEBI" id="CHEBI:58043"/>
        <dbReference type="EC" id="3.1.3.5"/>
    </reaction>
</comment>
<comment type="cofactor">
    <cofactor evidence="1">
        <name>a divalent metal cation</name>
        <dbReference type="ChEBI" id="CHEBI:60240"/>
    </cofactor>
    <text evidence="1">Binds 1 divalent metal cation per subunit.</text>
</comment>
<comment type="subcellular location">
    <subcellularLocation>
        <location evidence="1">Cytoplasm</location>
    </subcellularLocation>
</comment>
<comment type="similarity">
    <text evidence="1">Belongs to the SurE nucleotidase family.</text>
</comment>
<protein>
    <recommendedName>
        <fullName evidence="1">5'-nucleotidase SurE</fullName>
        <ecNumber evidence="1">3.1.3.5</ecNumber>
    </recommendedName>
    <alternativeName>
        <fullName evidence="1">Nucleoside 5'-monophosphate phosphohydrolase</fullName>
    </alternativeName>
</protein>